<proteinExistence type="inferred from homology"/>
<comment type="function">
    <text evidence="1">Transport of potassium into the cell. Likely operates as a K(+):H(+) symporter.</text>
</comment>
<comment type="catalytic activity">
    <reaction evidence="1">
        <text>K(+)(in) + H(+)(in) = K(+)(out) + H(+)(out)</text>
        <dbReference type="Rhea" id="RHEA:28490"/>
        <dbReference type="ChEBI" id="CHEBI:15378"/>
        <dbReference type="ChEBI" id="CHEBI:29103"/>
    </reaction>
    <physiologicalReaction direction="right-to-left" evidence="1">
        <dbReference type="Rhea" id="RHEA:28492"/>
    </physiologicalReaction>
</comment>
<comment type="subcellular location">
    <subcellularLocation>
        <location evidence="1">Cell membrane</location>
        <topology evidence="1">Multi-pass membrane protein</topology>
    </subcellularLocation>
</comment>
<comment type="similarity">
    <text evidence="1">Belongs to the HAK/KUP transporter (TC 2.A.72) family.</text>
</comment>
<accession>Q5FLF5</accession>
<protein>
    <recommendedName>
        <fullName evidence="1">Probable potassium transport system protein Kup 2</fullName>
    </recommendedName>
</protein>
<evidence type="ECO:0000255" key="1">
    <source>
        <dbReference type="HAMAP-Rule" id="MF_01522"/>
    </source>
</evidence>
<sequence length="671" mass="74681">MNKITKKQKMSFAGLLIAIGIVYGDIGTSPLYVMKSIVTENGGIANVNRELIVGSISLILWTVTLLTTVKYVMIALKATNHGEGGIFSLYALVRKRAKWLVIPALIGGAALLADGTLTPAVTVTTSIEGLKNMRFGDVIPVPSQEVVIMITIIILVILFSIQRMGTSVIGKAFGPIMLIWFTFLGVVGIANLSHDWSLLEAINPIHAIRILVSPANKVGILILGSVFLATTGAEALYSDVGHVSKANIIGSWPYIFVCLSLNYLGQGAWILHNVSYHAGNGDFNPFFEVVPSNLRLFAIALATIAAIIASQALITGSFTLVAEASSLKFLPRMNIIYPSTEKGQIYIPLINKMICVVTVAIVFLFRTSHHMEAAYGLAITVTMLMTTILLFEYLGKKGKPLYLRVIFLIAFAFIEGMFLISSLTKFLHGGYVTVLIAGFILVIMYVWFYGNKIRDKREAKNAYVRLDEYTEMLTDLSHCEDYPVYATNVVYMAKVKYNKFIKREMLYSILDKRPKRAKAYWFVTVNVTNEPYTAEYAVNTYGTKNVINVQLYLGFRKQTSVNVYLRQIVHELIADGTIEAQPQRFTTTPGRDVGDFSFVIVNDVISPLTKLTGYEKFMVEARVWLQNLSSNPASWFGLEYADTVVERVPLILGKHQESYIKRIKPKKQTKK</sequence>
<dbReference type="EMBL" id="CP000033">
    <property type="protein sequence ID" value="AAV42469.1"/>
    <property type="molecule type" value="Genomic_DNA"/>
</dbReference>
<dbReference type="RefSeq" id="WP_011254197.1">
    <property type="nucleotide sequence ID" value="NC_006814.3"/>
</dbReference>
<dbReference type="RefSeq" id="YP_193500.1">
    <property type="nucleotide sequence ID" value="NC_006814.3"/>
</dbReference>
<dbReference type="STRING" id="272621.LBA0590"/>
<dbReference type="KEGG" id="lac:LBA0590"/>
<dbReference type="PATRIC" id="fig|272621.13.peg.563"/>
<dbReference type="eggNOG" id="COG3158">
    <property type="taxonomic scope" value="Bacteria"/>
</dbReference>
<dbReference type="HOGENOM" id="CLU_008142_4_1_9"/>
<dbReference type="OrthoDB" id="9805577at2"/>
<dbReference type="BioCyc" id="LACI272621:G1G49-614-MONOMER"/>
<dbReference type="Proteomes" id="UP000006381">
    <property type="component" value="Chromosome"/>
</dbReference>
<dbReference type="GO" id="GO:0005886">
    <property type="term" value="C:plasma membrane"/>
    <property type="evidence" value="ECO:0007669"/>
    <property type="project" value="UniProtKB-SubCell"/>
</dbReference>
<dbReference type="GO" id="GO:0015079">
    <property type="term" value="F:potassium ion transmembrane transporter activity"/>
    <property type="evidence" value="ECO:0007669"/>
    <property type="project" value="UniProtKB-UniRule"/>
</dbReference>
<dbReference type="GO" id="GO:0015293">
    <property type="term" value="F:symporter activity"/>
    <property type="evidence" value="ECO:0007669"/>
    <property type="project" value="UniProtKB-UniRule"/>
</dbReference>
<dbReference type="HAMAP" id="MF_01522">
    <property type="entry name" value="Kup"/>
    <property type="match status" value="1"/>
</dbReference>
<dbReference type="InterPro" id="IPR003855">
    <property type="entry name" value="K+_transporter"/>
</dbReference>
<dbReference type="InterPro" id="IPR053952">
    <property type="entry name" value="K_trans_C"/>
</dbReference>
<dbReference type="InterPro" id="IPR053951">
    <property type="entry name" value="K_trans_N"/>
</dbReference>
<dbReference type="InterPro" id="IPR023051">
    <property type="entry name" value="Kup"/>
</dbReference>
<dbReference type="PANTHER" id="PTHR30540:SF83">
    <property type="entry name" value="K+ POTASSIUM TRANSPORTER"/>
    <property type="match status" value="1"/>
</dbReference>
<dbReference type="PANTHER" id="PTHR30540">
    <property type="entry name" value="OSMOTIC STRESS POTASSIUM TRANSPORTER"/>
    <property type="match status" value="1"/>
</dbReference>
<dbReference type="Pfam" id="PF02705">
    <property type="entry name" value="K_trans"/>
    <property type="match status" value="1"/>
</dbReference>
<dbReference type="Pfam" id="PF22776">
    <property type="entry name" value="K_trans_C"/>
    <property type="match status" value="1"/>
</dbReference>
<organism>
    <name type="scientific">Lactobacillus acidophilus (strain ATCC 700396 / NCK56 / N2 / NCFM)</name>
    <dbReference type="NCBI Taxonomy" id="272621"/>
    <lineage>
        <taxon>Bacteria</taxon>
        <taxon>Bacillati</taxon>
        <taxon>Bacillota</taxon>
        <taxon>Bacilli</taxon>
        <taxon>Lactobacillales</taxon>
        <taxon>Lactobacillaceae</taxon>
        <taxon>Lactobacillus</taxon>
    </lineage>
</organism>
<name>KUP2_LACAC</name>
<gene>
    <name evidence="1" type="primary">kup2</name>
    <name type="ordered locus">LBA0590</name>
</gene>
<feature type="chain" id="PRO_0000209021" description="Probable potassium transport system protein Kup 2">
    <location>
        <begin position="1"/>
        <end position="671"/>
    </location>
</feature>
<feature type="transmembrane region" description="Helical" evidence="1">
    <location>
        <begin position="12"/>
        <end position="32"/>
    </location>
</feature>
<feature type="transmembrane region" description="Helical" evidence="1">
    <location>
        <begin position="56"/>
        <end position="76"/>
    </location>
</feature>
<feature type="transmembrane region" description="Helical" evidence="1">
    <location>
        <begin position="99"/>
        <end position="119"/>
    </location>
</feature>
<feature type="transmembrane region" description="Helical" evidence="1">
    <location>
        <begin position="139"/>
        <end position="159"/>
    </location>
</feature>
<feature type="transmembrane region" description="Helical" evidence="1">
    <location>
        <begin position="172"/>
        <end position="192"/>
    </location>
</feature>
<feature type="transmembrane region" description="Helical" evidence="1">
    <location>
        <begin position="218"/>
        <end position="238"/>
    </location>
</feature>
<feature type="transmembrane region" description="Helical" evidence="1">
    <location>
        <begin position="251"/>
        <end position="271"/>
    </location>
</feature>
<feature type="transmembrane region" description="Helical" evidence="1">
    <location>
        <begin position="296"/>
        <end position="316"/>
    </location>
</feature>
<feature type="transmembrane region" description="Helical" evidence="1">
    <location>
        <begin position="345"/>
        <end position="365"/>
    </location>
</feature>
<feature type="transmembrane region" description="Helical" evidence="1">
    <location>
        <begin position="374"/>
        <end position="394"/>
    </location>
</feature>
<feature type="transmembrane region" description="Helical" evidence="1">
    <location>
        <begin position="400"/>
        <end position="420"/>
    </location>
</feature>
<feature type="transmembrane region" description="Helical" evidence="1">
    <location>
        <begin position="429"/>
        <end position="449"/>
    </location>
</feature>
<reference key="1">
    <citation type="journal article" date="2005" name="Proc. Natl. Acad. Sci. U.S.A.">
        <title>Complete genome sequence of the probiotic lactic acid bacterium Lactobacillus acidophilus NCFM.</title>
        <authorList>
            <person name="Altermann E."/>
            <person name="Russell W.M."/>
            <person name="Azcarate-Peril M.A."/>
            <person name="Barrangou R."/>
            <person name="Buck B.L."/>
            <person name="McAuliffe O."/>
            <person name="Souther N."/>
            <person name="Dobson A."/>
            <person name="Duong T."/>
            <person name="Callanan M."/>
            <person name="Lick S."/>
            <person name="Hamrick A."/>
            <person name="Cano R."/>
            <person name="Klaenhammer T.R."/>
        </authorList>
    </citation>
    <scope>NUCLEOTIDE SEQUENCE [LARGE SCALE GENOMIC DNA]</scope>
    <source>
        <strain>ATCC 700396 / NCK56 / N2 / NCFM</strain>
    </source>
</reference>
<keyword id="KW-1003">Cell membrane</keyword>
<keyword id="KW-0406">Ion transport</keyword>
<keyword id="KW-0472">Membrane</keyword>
<keyword id="KW-0630">Potassium</keyword>
<keyword id="KW-0633">Potassium transport</keyword>
<keyword id="KW-1185">Reference proteome</keyword>
<keyword id="KW-0769">Symport</keyword>
<keyword id="KW-0812">Transmembrane</keyword>
<keyword id="KW-1133">Transmembrane helix</keyword>
<keyword id="KW-0813">Transport</keyword>